<keyword id="KW-0472">Membrane</keyword>
<keyword id="KW-0602">Photosynthesis</keyword>
<keyword id="KW-0604">Photosystem II</keyword>
<keyword id="KW-0674">Reaction center</keyword>
<keyword id="KW-1185">Reference proteome</keyword>
<keyword id="KW-0793">Thylakoid</keyword>
<keyword id="KW-0812">Transmembrane</keyword>
<keyword id="KW-1133">Transmembrane helix</keyword>
<dbReference type="EMBL" id="CP000806">
    <property type="protein sequence ID" value="ACB53866.1"/>
    <property type="molecule type" value="Genomic_DNA"/>
</dbReference>
<dbReference type="RefSeq" id="WP_007303855.1">
    <property type="nucleotide sequence ID" value="NC_010546.1"/>
</dbReference>
<dbReference type="SMR" id="B1WUL2"/>
<dbReference type="STRING" id="43989.cce_4518"/>
<dbReference type="KEGG" id="cyt:cce_4518"/>
<dbReference type="eggNOG" id="ENOG5032YQR">
    <property type="taxonomic scope" value="Bacteria"/>
</dbReference>
<dbReference type="HOGENOM" id="CLU_174355_0_0_3"/>
<dbReference type="Proteomes" id="UP000001203">
    <property type="component" value="Chromosome circular"/>
</dbReference>
<dbReference type="GO" id="GO:0009539">
    <property type="term" value="C:photosystem II reaction center"/>
    <property type="evidence" value="ECO:0007669"/>
    <property type="project" value="InterPro"/>
</dbReference>
<dbReference type="GO" id="GO:0031676">
    <property type="term" value="C:plasma membrane-derived thylakoid membrane"/>
    <property type="evidence" value="ECO:0007669"/>
    <property type="project" value="UniProtKB-SubCell"/>
</dbReference>
<dbReference type="GO" id="GO:0015979">
    <property type="term" value="P:photosynthesis"/>
    <property type="evidence" value="ECO:0007669"/>
    <property type="project" value="UniProtKB-UniRule"/>
</dbReference>
<dbReference type="HAMAP" id="MF_00441">
    <property type="entry name" value="PSII_PsbK"/>
    <property type="match status" value="1"/>
</dbReference>
<dbReference type="InterPro" id="IPR003687">
    <property type="entry name" value="PSII_PsbK"/>
</dbReference>
<dbReference type="InterPro" id="IPR037270">
    <property type="entry name" value="PSII_PsbK_sf"/>
</dbReference>
<dbReference type="NCBIfam" id="NF002715">
    <property type="entry name" value="PRK02553.1"/>
    <property type="match status" value="1"/>
</dbReference>
<dbReference type="PANTHER" id="PTHR35325">
    <property type="match status" value="1"/>
</dbReference>
<dbReference type="PANTHER" id="PTHR35325:SF1">
    <property type="entry name" value="PHOTOSYSTEM II REACTION CENTER PROTEIN K"/>
    <property type="match status" value="1"/>
</dbReference>
<dbReference type="Pfam" id="PF02533">
    <property type="entry name" value="PsbK"/>
    <property type="match status" value="1"/>
</dbReference>
<dbReference type="SUPFAM" id="SSF161037">
    <property type="entry name" value="Photosystem II reaction center protein K, PsbK"/>
    <property type="match status" value="1"/>
</dbReference>
<feature type="propeptide" id="PRO_1000192875" evidence="1">
    <location>
        <begin position="1"/>
        <end position="8"/>
    </location>
</feature>
<feature type="chain" id="PRO_1000192876" description="Photosystem II reaction center protein K" evidence="1">
    <location>
        <begin position="9"/>
        <end position="45"/>
    </location>
</feature>
<feature type="transmembrane region" description="Helical" evidence="1">
    <location>
        <begin position="24"/>
        <end position="44"/>
    </location>
</feature>
<proteinExistence type="inferred from homology"/>
<evidence type="ECO:0000255" key="1">
    <source>
        <dbReference type="HAMAP-Rule" id="MF_00441"/>
    </source>
</evidence>
<name>PSBK_CROS5</name>
<organism>
    <name type="scientific">Crocosphaera subtropica (strain ATCC 51142 / BH68)</name>
    <name type="common">Cyanothece sp. (strain ATCC 51142)</name>
    <dbReference type="NCBI Taxonomy" id="43989"/>
    <lineage>
        <taxon>Bacteria</taxon>
        <taxon>Bacillati</taxon>
        <taxon>Cyanobacteriota</taxon>
        <taxon>Cyanophyceae</taxon>
        <taxon>Oscillatoriophycideae</taxon>
        <taxon>Chroococcales</taxon>
        <taxon>Aphanothecaceae</taxon>
        <taxon>Crocosphaera</taxon>
        <taxon>Crocosphaera subtropica</taxon>
    </lineage>
</organism>
<reference key="1">
    <citation type="journal article" date="2008" name="Proc. Natl. Acad. Sci. U.S.A.">
        <title>The genome of Cyanothece 51142, a unicellular diazotrophic cyanobacterium important in the marine nitrogen cycle.</title>
        <authorList>
            <person name="Welsh E.A."/>
            <person name="Liberton M."/>
            <person name="Stoeckel J."/>
            <person name="Loh T."/>
            <person name="Elvitigala T."/>
            <person name="Wang C."/>
            <person name="Wollam A."/>
            <person name="Fulton R.S."/>
            <person name="Clifton S.W."/>
            <person name="Jacobs J.M."/>
            <person name="Aurora R."/>
            <person name="Ghosh B.K."/>
            <person name="Sherman L.A."/>
            <person name="Smith R.D."/>
            <person name="Wilson R.K."/>
            <person name="Pakrasi H.B."/>
        </authorList>
    </citation>
    <scope>NUCLEOTIDE SEQUENCE [LARGE SCALE GENOMIC DNA]</scope>
    <source>
        <strain>ATCC 51142 / BH68</strain>
    </source>
</reference>
<sequence length="45" mass="5038">MEAVFLLAKLPEAYQIFDPLVDVLPVIPVFFLALAFVWQAAVGFK</sequence>
<accession>B1WUL2</accession>
<comment type="function">
    <text evidence="1">One of the components of the core complex of photosystem II (PSII). PSII is a light-driven water:plastoquinone oxidoreductase that uses light energy to abstract electrons from H(2)O, generating O(2) and a proton gradient subsequently used for ATP formation. It consists of a core antenna complex that captures photons, and an electron transfer chain that converts photonic excitation into a charge separation.</text>
</comment>
<comment type="subunit">
    <text evidence="1">PSII is composed of 1 copy each of membrane proteins PsbA, PsbB, PsbC, PsbD, PsbE, PsbF, PsbH, PsbI, PsbJ, PsbK, PsbL, PsbM, PsbT, PsbX, PsbY, PsbZ, Psb30/Ycf12, peripheral proteins PsbO, CyanoQ (PsbQ), PsbU, PsbV and a large number of cofactors. It forms dimeric complexes.</text>
</comment>
<comment type="subcellular location">
    <subcellularLocation>
        <location evidence="1">Cellular thylakoid membrane</location>
        <topology evidence="1">Single-pass membrane protein</topology>
    </subcellularLocation>
</comment>
<comment type="similarity">
    <text evidence="1">Belongs to the PsbK family.</text>
</comment>
<gene>
    <name evidence="1" type="primary">psbK</name>
    <name type="ordered locus">cce_4518</name>
</gene>
<protein>
    <recommendedName>
        <fullName evidence="1">Photosystem II reaction center protein K</fullName>
        <shortName evidence="1">PSII-K</shortName>
    </recommendedName>
</protein>